<proteinExistence type="inferred from homology"/>
<accession>Q0HIL9</accession>
<sequence>MSPSPFAPTIETIDYPFPPKPIPLSDAEKADYKARIKQLLIEKDAVLVAHYYTDPEIQALAEETGGCVSDSLEMARFGRDHPAKTLIVAGVKFMGETAKILSPEKTILMPTLEATCSLDLGCPIDKFSAFCDAHPDHTVVVYANTSAAVKARADWVVTSSIALEIVEHLDSEGKKIIWGPDRHLGSYIAKQTGAEMLMWQGDCIVHDEFKANALRDLKRVYPDAAILVHPESPASVVAMADAVGSTSQLIKAAQTMANERFIVATDRGIFYKMQQAAPGKTLIEAPTGGNGATCKSCAHCPWMAMNGLKAIEASLSDSDKTTHEIFVDEDLRVKALIPLTRMLDFAKTLNMKVKGNA</sequence>
<organism>
    <name type="scientific">Shewanella sp. (strain MR-4)</name>
    <dbReference type="NCBI Taxonomy" id="60480"/>
    <lineage>
        <taxon>Bacteria</taxon>
        <taxon>Pseudomonadati</taxon>
        <taxon>Pseudomonadota</taxon>
        <taxon>Gammaproteobacteria</taxon>
        <taxon>Alteromonadales</taxon>
        <taxon>Shewanellaceae</taxon>
        <taxon>Shewanella</taxon>
    </lineage>
</organism>
<protein>
    <recommendedName>
        <fullName evidence="1">Quinolinate synthase</fullName>
        <ecNumber evidence="1">2.5.1.72</ecNumber>
    </recommendedName>
</protein>
<comment type="function">
    <text evidence="1">Catalyzes the condensation of iminoaspartate with dihydroxyacetone phosphate to form quinolinate.</text>
</comment>
<comment type="catalytic activity">
    <reaction evidence="1">
        <text>iminosuccinate + dihydroxyacetone phosphate = quinolinate + phosphate + 2 H2O + H(+)</text>
        <dbReference type="Rhea" id="RHEA:25888"/>
        <dbReference type="ChEBI" id="CHEBI:15377"/>
        <dbReference type="ChEBI" id="CHEBI:15378"/>
        <dbReference type="ChEBI" id="CHEBI:29959"/>
        <dbReference type="ChEBI" id="CHEBI:43474"/>
        <dbReference type="ChEBI" id="CHEBI:57642"/>
        <dbReference type="ChEBI" id="CHEBI:77875"/>
        <dbReference type="EC" id="2.5.1.72"/>
    </reaction>
    <physiologicalReaction direction="left-to-right" evidence="1">
        <dbReference type="Rhea" id="RHEA:25889"/>
    </physiologicalReaction>
</comment>
<comment type="cofactor">
    <cofactor evidence="1">
        <name>[4Fe-4S] cluster</name>
        <dbReference type="ChEBI" id="CHEBI:49883"/>
    </cofactor>
    <text evidence="1">Binds 1 [4Fe-4S] cluster per subunit.</text>
</comment>
<comment type="pathway">
    <text evidence="1">Cofactor biosynthesis; NAD(+) biosynthesis; quinolinate from iminoaspartate: step 1/1.</text>
</comment>
<comment type="subcellular location">
    <subcellularLocation>
        <location evidence="1">Cytoplasm</location>
    </subcellularLocation>
</comment>
<comment type="similarity">
    <text evidence="1">Belongs to the quinolinate synthase family. Type 1 subfamily.</text>
</comment>
<keyword id="KW-0004">4Fe-4S</keyword>
<keyword id="KW-0963">Cytoplasm</keyword>
<keyword id="KW-0408">Iron</keyword>
<keyword id="KW-0411">Iron-sulfur</keyword>
<keyword id="KW-0479">Metal-binding</keyword>
<keyword id="KW-0662">Pyridine nucleotide biosynthesis</keyword>
<keyword id="KW-0808">Transferase</keyword>
<evidence type="ECO:0000255" key="1">
    <source>
        <dbReference type="HAMAP-Rule" id="MF_00567"/>
    </source>
</evidence>
<reference key="1">
    <citation type="submission" date="2006-08" db="EMBL/GenBank/DDBJ databases">
        <title>Complete sequence of Shewanella sp. MR-4.</title>
        <authorList>
            <consortium name="US DOE Joint Genome Institute"/>
            <person name="Copeland A."/>
            <person name="Lucas S."/>
            <person name="Lapidus A."/>
            <person name="Barry K."/>
            <person name="Detter J.C."/>
            <person name="Glavina del Rio T."/>
            <person name="Hammon N."/>
            <person name="Israni S."/>
            <person name="Dalin E."/>
            <person name="Tice H."/>
            <person name="Pitluck S."/>
            <person name="Kiss H."/>
            <person name="Brettin T."/>
            <person name="Bruce D."/>
            <person name="Han C."/>
            <person name="Tapia R."/>
            <person name="Gilna P."/>
            <person name="Schmutz J."/>
            <person name="Larimer F."/>
            <person name="Land M."/>
            <person name="Hauser L."/>
            <person name="Kyrpides N."/>
            <person name="Mikhailova N."/>
            <person name="Nealson K."/>
            <person name="Konstantinidis K."/>
            <person name="Klappenbach J."/>
            <person name="Tiedje J."/>
            <person name="Richardson P."/>
        </authorList>
    </citation>
    <scope>NUCLEOTIDE SEQUENCE [LARGE SCALE GENOMIC DNA]</scope>
    <source>
        <strain>MR-4</strain>
    </source>
</reference>
<name>NADA_SHESM</name>
<dbReference type="EC" id="2.5.1.72" evidence="1"/>
<dbReference type="EMBL" id="CP000446">
    <property type="protein sequence ID" value="ABI39098.1"/>
    <property type="molecule type" value="Genomic_DNA"/>
</dbReference>
<dbReference type="RefSeq" id="WP_011622789.1">
    <property type="nucleotide sequence ID" value="NC_008321.1"/>
</dbReference>
<dbReference type="SMR" id="Q0HIL9"/>
<dbReference type="GeneID" id="94728063"/>
<dbReference type="KEGG" id="she:Shewmr4_2025"/>
<dbReference type="HOGENOM" id="CLU_047382_1_0_6"/>
<dbReference type="UniPathway" id="UPA00253">
    <property type="reaction ID" value="UER00327"/>
</dbReference>
<dbReference type="GO" id="GO:0005829">
    <property type="term" value="C:cytosol"/>
    <property type="evidence" value="ECO:0007669"/>
    <property type="project" value="TreeGrafter"/>
</dbReference>
<dbReference type="GO" id="GO:0051539">
    <property type="term" value="F:4 iron, 4 sulfur cluster binding"/>
    <property type="evidence" value="ECO:0007669"/>
    <property type="project" value="UniProtKB-KW"/>
</dbReference>
<dbReference type="GO" id="GO:0046872">
    <property type="term" value="F:metal ion binding"/>
    <property type="evidence" value="ECO:0007669"/>
    <property type="project" value="UniProtKB-KW"/>
</dbReference>
<dbReference type="GO" id="GO:0008987">
    <property type="term" value="F:quinolinate synthetase A activity"/>
    <property type="evidence" value="ECO:0007669"/>
    <property type="project" value="UniProtKB-UniRule"/>
</dbReference>
<dbReference type="GO" id="GO:0034628">
    <property type="term" value="P:'de novo' NAD biosynthetic process from L-aspartate"/>
    <property type="evidence" value="ECO:0007669"/>
    <property type="project" value="TreeGrafter"/>
</dbReference>
<dbReference type="FunFam" id="3.40.50.10800:FF:000003">
    <property type="entry name" value="Quinolinate synthase A"/>
    <property type="match status" value="1"/>
</dbReference>
<dbReference type="Gene3D" id="3.40.50.10800">
    <property type="entry name" value="NadA-like"/>
    <property type="match status" value="3"/>
</dbReference>
<dbReference type="HAMAP" id="MF_00567">
    <property type="entry name" value="NadA_type1"/>
    <property type="match status" value="1"/>
</dbReference>
<dbReference type="InterPro" id="IPR003473">
    <property type="entry name" value="NadA"/>
</dbReference>
<dbReference type="InterPro" id="IPR036094">
    <property type="entry name" value="NadA_sf"/>
</dbReference>
<dbReference type="InterPro" id="IPR023513">
    <property type="entry name" value="Quinolinate_synth_A_type1"/>
</dbReference>
<dbReference type="NCBIfam" id="TIGR00550">
    <property type="entry name" value="nadA"/>
    <property type="match status" value="1"/>
</dbReference>
<dbReference type="NCBIfam" id="NF006877">
    <property type="entry name" value="PRK09375.1-1"/>
    <property type="match status" value="1"/>
</dbReference>
<dbReference type="NCBIfam" id="NF006878">
    <property type="entry name" value="PRK09375.1-2"/>
    <property type="match status" value="1"/>
</dbReference>
<dbReference type="PANTHER" id="PTHR30573:SF0">
    <property type="entry name" value="QUINOLINATE SYNTHASE, CHLOROPLASTIC"/>
    <property type="match status" value="1"/>
</dbReference>
<dbReference type="PANTHER" id="PTHR30573">
    <property type="entry name" value="QUINOLINATE SYNTHETASE A"/>
    <property type="match status" value="1"/>
</dbReference>
<dbReference type="Pfam" id="PF02445">
    <property type="entry name" value="NadA"/>
    <property type="match status" value="1"/>
</dbReference>
<dbReference type="SUPFAM" id="SSF142754">
    <property type="entry name" value="NadA-like"/>
    <property type="match status" value="1"/>
</dbReference>
<feature type="chain" id="PRO_1000024971" description="Quinolinate synthase">
    <location>
        <begin position="1"/>
        <end position="357"/>
    </location>
</feature>
<feature type="binding site" evidence="1">
    <location>
        <position position="50"/>
    </location>
    <ligand>
        <name>iminosuccinate</name>
        <dbReference type="ChEBI" id="CHEBI:77875"/>
    </ligand>
</feature>
<feature type="binding site" evidence="1">
    <location>
        <position position="71"/>
    </location>
    <ligand>
        <name>iminosuccinate</name>
        <dbReference type="ChEBI" id="CHEBI:77875"/>
    </ligand>
</feature>
<feature type="binding site" evidence="1">
    <location>
        <position position="116"/>
    </location>
    <ligand>
        <name>[4Fe-4S] cluster</name>
        <dbReference type="ChEBI" id="CHEBI:49883"/>
    </ligand>
</feature>
<feature type="binding site" evidence="1">
    <location>
        <begin position="142"/>
        <end position="144"/>
    </location>
    <ligand>
        <name>iminosuccinate</name>
        <dbReference type="ChEBI" id="CHEBI:77875"/>
    </ligand>
</feature>
<feature type="binding site" evidence="1">
    <location>
        <position position="159"/>
    </location>
    <ligand>
        <name>iminosuccinate</name>
        <dbReference type="ChEBI" id="CHEBI:77875"/>
    </ligand>
</feature>
<feature type="binding site" evidence="1">
    <location>
        <position position="203"/>
    </location>
    <ligand>
        <name>[4Fe-4S] cluster</name>
        <dbReference type="ChEBI" id="CHEBI:49883"/>
    </ligand>
</feature>
<feature type="binding site" evidence="1">
    <location>
        <begin position="229"/>
        <end position="231"/>
    </location>
    <ligand>
        <name>iminosuccinate</name>
        <dbReference type="ChEBI" id="CHEBI:77875"/>
    </ligand>
</feature>
<feature type="binding site" evidence="1">
    <location>
        <position position="246"/>
    </location>
    <ligand>
        <name>iminosuccinate</name>
        <dbReference type="ChEBI" id="CHEBI:77875"/>
    </ligand>
</feature>
<feature type="binding site" evidence="1">
    <location>
        <position position="300"/>
    </location>
    <ligand>
        <name>[4Fe-4S] cluster</name>
        <dbReference type="ChEBI" id="CHEBI:49883"/>
    </ligand>
</feature>
<gene>
    <name evidence="1" type="primary">nadA</name>
    <name type="ordered locus">Shewmr4_2025</name>
</gene>